<dbReference type="EC" id="3.5.2.6"/>
<dbReference type="EMBL" id="X03866">
    <property type="protein sequence ID" value="CAA27494.1"/>
    <property type="molecule type" value="Genomic_DNA"/>
</dbReference>
<dbReference type="EMBL" id="X51632">
    <property type="protein sequence ID" value="CAA35959.1"/>
    <property type="molecule type" value="Genomic_DNA"/>
</dbReference>
<dbReference type="PIR" id="S08296">
    <property type="entry name" value="S08296"/>
</dbReference>
<dbReference type="PDB" id="1RGY">
    <property type="method" value="X-ray"/>
    <property type="resolution" value="1.52 A"/>
    <property type="chains" value="A=22-381"/>
</dbReference>
<dbReference type="PDBsum" id="1RGY"/>
<dbReference type="SMR" id="P05193"/>
<dbReference type="STRING" id="1333848.CFNIH1_08415"/>
<dbReference type="BindingDB" id="P05193"/>
<dbReference type="ChEMBL" id="CHEMBL1255130"/>
<dbReference type="DrugBank" id="DB00355">
    <property type="generic name" value="Aztreonam"/>
</dbReference>
<dbReference type="DrugCentral" id="P05193"/>
<dbReference type="MEROPS" id="S12.006"/>
<dbReference type="SABIO-RK" id="P05193"/>
<dbReference type="EvolutionaryTrace" id="P05193"/>
<dbReference type="GO" id="GO:0030288">
    <property type="term" value="C:outer membrane-bounded periplasmic space"/>
    <property type="evidence" value="ECO:0007669"/>
    <property type="project" value="InterPro"/>
</dbReference>
<dbReference type="GO" id="GO:0008800">
    <property type="term" value="F:beta-lactamase activity"/>
    <property type="evidence" value="ECO:0007669"/>
    <property type="project" value="UniProtKB-EC"/>
</dbReference>
<dbReference type="GO" id="GO:0017001">
    <property type="term" value="P:antibiotic catabolic process"/>
    <property type="evidence" value="ECO:0007669"/>
    <property type="project" value="InterPro"/>
</dbReference>
<dbReference type="GO" id="GO:0046677">
    <property type="term" value="P:response to antibiotic"/>
    <property type="evidence" value="ECO:0000315"/>
    <property type="project" value="CACAO"/>
</dbReference>
<dbReference type="FunFam" id="3.40.710.10:FF:000012">
    <property type="entry name" value="Beta-lactamase"/>
    <property type="match status" value="1"/>
</dbReference>
<dbReference type="Gene3D" id="3.40.710.10">
    <property type="entry name" value="DD-peptidase/beta-lactamase superfamily"/>
    <property type="match status" value="1"/>
</dbReference>
<dbReference type="InterPro" id="IPR050491">
    <property type="entry name" value="Bact_CellWall_Synth/Modif"/>
</dbReference>
<dbReference type="InterPro" id="IPR001466">
    <property type="entry name" value="Beta-lactam-related"/>
</dbReference>
<dbReference type="InterPro" id="IPR012338">
    <property type="entry name" value="Beta-lactam/transpept-like"/>
</dbReference>
<dbReference type="InterPro" id="IPR001586">
    <property type="entry name" value="Beta-lactam_class-C_AS"/>
</dbReference>
<dbReference type="NCBIfam" id="NF033085">
    <property type="entry name" value="bla_class_C"/>
    <property type="match status" value="1"/>
</dbReference>
<dbReference type="NCBIfam" id="NF000191">
    <property type="entry name" value="CMY2"/>
    <property type="match status" value="1"/>
</dbReference>
<dbReference type="NCBIfam" id="NF012173">
    <property type="entry name" value="CMY2-MIR-ACT-EC"/>
    <property type="match status" value="1"/>
</dbReference>
<dbReference type="PANTHER" id="PTHR46825:SF8">
    <property type="entry name" value="BETA-LACTAMASE-RELATED"/>
    <property type="match status" value="1"/>
</dbReference>
<dbReference type="PANTHER" id="PTHR46825">
    <property type="entry name" value="D-ALANYL-D-ALANINE-CARBOXYPEPTIDASE/ENDOPEPTIDASE AMPH"/>
    <property type="match status" value="1"/>
</dbReference>
<dbReference type="Pfam" id="PF00144">
    <property type="entry name" value="Beta-lactamase"/>
    <property type="match status" value="1"/>
</dbReference>
<dbReference type="SUPFAM" id="SSF56601">
    <property type="entry name" value="beta-lactamase/transpeptidase-like"/>
    <property type="match status" value="1"/>
</dbReference>
<dbReference type="PROSITE" id="PS00336">
    <property type="entry name" value="BETA_LACTAMASE_C"/>
    <property type="match status" value="1"/>
</dbReference>
<protein>
    <recommendedName>
        <fullName>Beta-lactamase</fullName>
        <ecNumber>3.5.2.6</ecNumber>
    </recommendedName>
    <alternativeName>
        <fullName>Cephalosporinase</fullName>
    </alternativeName>
</protein>
<organism>
    <name type="scientific">Citrobacter freundii</name>
    <dbReference type="NCBI Taxonomy" id="546"/>
    <lineage>
        <taxon>Bacteria</taxon>
        <taxon>Pseudomonadati</taxon>
        <taxon>Pseudomonadota</taxon>
        <taxon>Gammaproteobacteria</taxon>
        <taxon>Enterobacterales</taxon>
        <taxon>Enterobacteriaceae</taxon>
        <taxon>Citrobacter</taxon>
        <taxon>Citrobacter freundii complex</taxon>
    </lineage>
</organism>
<sequence length="381" mass="41975">MMKKSICCALLLTASFSTFAAAKTEQQIADIVNRTITPLMQEQAIPGMAVAIIYEGKPYYFTWGKADIANNHPVTQQTLFELGSVSKTFNGVLGGDRIARGEIKLSDPVTKYWPELTGKQWRGISLLHLATYTAGGLPLQIPGDVTDKAELLRFYQNWQPQWTPGAKRLYANSSIGLFGALAVKSSGMSYEEAMTRRVLQPLKLAHTWITVPQSEQKNYAWGYLEGKPVHVSPGQLDAEAYGVKSSVIDMARWVQANMDASHVQEKTLQQGIELAQSRYWRIGDMYQGLGWEMLNWPLKADSIINGSDSKVALAALPAVEVNPPAPAVKASWVHKTGSTGGFGSYVAFVPEKNLGIVMLANKSYPNPARVEAAWRILEKLQ</sequence>
<feature type="signal peptide">
    <location>
        <begin position="1"/>
        <end position="20"/>
    </location>
</feature>
<feature type="chain" id="PRO_0000016957" description="Beta-lactamase">
    <location>
        <begin position="21"/>
        <end position="381"/>
    </location>
</feature>
<feature type="active site" description="Acyl-ester intermediate">
    <location>
        <position position="84"/>
    </location>
</feature>
<feature type="active site" description="Proton acceptor">
    <location>
        <position position="170"/>
    </location>
</feature>
<feature type="binding site" evidence="1">
    <location>
        <begin position="335"/>
        <end position="337"/>
    </location>
    <ligand>
        <name>substrate</name>
    </ligand>
</feature>
<feature type="sequence variant" description="In strain: GN346.">
    <original>R</original>
    <variation>A</variation>
    <location>
        <position position="97"/>
    </location>
</feature>
<feature type="sequence variant" description="In strain: GN346.">
    <original>G</original>
    <variation>D</variation>
    <location>
        <position position="143"/>
    </location>
</feature>
<feature type="sequence variant" description="In strain: GN346.">
    <original>V</original>
    <variation>I</variation>
    <location>
        <position position="145"/>
    </location>
</feature>
<feature type="sequence variant" description="In strain: GN346.">
    <original>E</original>
    <variation>A</variation>
    <location>
        <position position="150"/>
    </location>
</feature>
<feature type="sequence variant" description="In strain: GN346.">
    <original>S</original>
    <variation>P</variation>
    <location>
        <position position="185"/>
    </location>
</feature>
<feature type="sequence variant" description="In strain: GN346.">
    <original>L</original>
    <variation>R</variation>
    <location>
        <position position="224"/>
    </location>
</feature>
<feature type="sequence variant" description="In strain: GN346.">
    <original>V</original>
    <variation>L</variation>
    <location>
        <position position="243"/>
    </location>
</feature>
<feature type="sequence variant" description="In strain: GN346.">
    <original>A</original>
    <variation>V</variation>
    <location>
        <position position="325"/>
    </location>
</feature>
<feature type="sequence variant" description="In strain: GN346.">
    <original>A</original>
    <variation>V</variation>
    <location>
        <position position="368"/>
    </location>
</feature>
<feature type="sequence conflict" description="In Ref. 3." evidence="3" ref="3">
    <original>I</original>
    <variation>T</variation>
    <location>
        <position position="98"/>
    </location>
</feature>
<feature type="helix" evidence="5">
    <location>
        <begin position="25"/>
        <end position="43"/>
    </location>
</feature>
<feature type="strand" evidence="5">
    <location>
        <begin position="46"/>
        <end position="54"/>
    </location>
</feature>
<feature type="strand" evidence="5">
    <location>
        <begin position="57"/>
        <end position="67"/>
    </location>
</feature>
<feature type="turn" evidence="5">
    <location>
        <begin position="68"/>
        <end position="71"/>
    </location>
</feature>
<feature type="strand" evidence="5">
    <location>
        <begin position="79"/>
        <end position="81"/>
    </location>
</feature>
<feature type="helix" evidence="5">
    <location>
        <begin position="83"/>
        <end position="85"/>
    </location>
</feature>
<feature type="helix" evidence="5">
    <location>
        <begin position="86"/>
        <end position="99"/>
    </location>
</feature>
<feature type="helix" evidence="5">
    <location>
        <begin position="109"/>
        <end position="112"/>
    </location>
</feature>
<feature type="helix" evidence="5">
    <location>
        <begin position="119"/>
        <end position="121"/>
    </location>
</feature>
<feature type="helix" evidence="5">
    <location>
        <begin position="126"/>
        <end position="130"/>
    </location>
</feature>
<feature type="helix" evidence="5">
    <location>
        <begin position="148"/>
        <end position="157"/>
    </location>
</feature>
<feature type="strand" evidence="5">
    <location>
        <begin position="166"/>
        <end position="168"/>
    </location>
</feature>
<feature type="helix" evidence="5">
    <location>
        <begin position="172"/>
        <end position="182"/>
    </location>
</feature>
<feature type="turn" evidence="5">
    <location>
        <begin position="183"/>
        <end position="187"/>
    </location>
</feature>
<feature type="helix" evidence="5">
    <location>
        <begin position="190"/>
        <end position="197"/>
    </location>
</feature>
<feature type="turn" evidence="5">
    <location>
        <begin position="198"/>
        <end position="203"/>
    </location>
</feature>
<feature type="strand" evidence="5">
    <location>
        <begin position="207"/>
        <end position="210"/>
    </location>
</feature>
<feature type="helix" evidence="5">
    <location>
        <begin position="213"/>
        <end position="218"/>
    </location>
</feature>
<feature type="strand" evidence="5">
    <location>
        <begin position="222"/>
        <end position="224"/>
    </location>
</feature>
<feature type="strand" evidence="5">
    <location>
        <begin position="227"/>
        <end position="229"/>
    </location>
</feature>
<feature type="helix" evidence="5">
    <location>
        <begin position="237"/>
        <end position="240"/>
    </location>
</feature>
<feature type="helix" evidence="5">
    <location>
        <begin position="247"/>
        <end position="258"/>
    </location>
</feature>
<feature type="helix" evidence="5">
    <location>
        <begin position="260"/>
        <end position="262"/>
    </location>
</feature>
<feature type="helix" evidence="5">
    <location>
        <begin position="266"/>
        <end position="275"/>
    </location>
</feature>
<feature type="strand" evidence="5">
    <location>
        <begin position="277"/>
        <end position="282"/>
    </location>
</feature>
<feature type="strand" evidence="5">
    <location>
        <begin position="285"/>
        <end position="287"/>
    </location>
</feature>
<feature type="strand" evidence="5">
    <location>
        <begin position="292"/>
        <end position="297"/>
    </location>
</feature>
<feature type="helix" evidence="5">
    <location>
        <begin position="300"/>
        <end position="306"/>
    </location>
</feature>
<feature type="helix" evidence="5">
    <location>
        <begin position="309"/>
        <end position="312"/>
    </location>
</feature>
<feature type="strand" evidence="5">
    <location>
        <begin position="319"/>
        <end position="325"/>
    </location>
</feature>
<feature type="strand" evidence="5">
    <location>
        <begin position="329"/>
        <end position="338"/>
    </location>
</feature>
<feature type="strand" evidence="5">
    <location>
        <begin position="343"/>
        <end position="349"/>
    </location>
</feature>
<feature type="helix" evidence="5">
    <location>
        <begin position="350"/>
        <end position="352"/>
    </location>
</feature>
<feature type="strand" evidence="5">
    <location>
        <begin position="354"/>
        <end position="362"/>
    </location>
</feature>
<feature type="helix" evidence="5">
    <location>
        <begin position="366"/>
        <end position="378"/>
    </location>
</feature>
<proteinExistence type="evidence at protein level"/>
<name>AMPC_CITFR</name>
<accession>P05193</accession>
<gene>
    <name type="primary">ampC</name>
    <name type="synonym">blaC</name>
</gene>
<evidence type="ECO:0000250" key="1"/>
<evidence type="ECO:0000255" key="2">
    <source>
        <dbReference type="PROSITE-ProRule" id="PRU10102"/>
    </source>
</evidence>
<evidence type="ECO:0000305" key="3"/>
<evidence type="ECO:0000305" key="4">
    <source>
    </source>
</evidence>
<evidence type="ECO:0007829" key="5">
    <source>
        <dbReference type="PDB" id="1RGY"/>
    </source>
</evidence>
<reference key="1">
    <citation type="journal article" date="1986" name="Eur. J. Biochem.">
        <title>Sequence of the Citrobacter freundii OS60 chromosomal ampC beta-lactamase gene.</title>
        <authorList>
            <person name="Lindberg F."/>
            <person name="Normark S."/>
        </authorList>
    </citation>
    <scope>NUCLEOTIDE SEQUENCE [GENOMIC DNA]</scope>
    <source>
        <strain>OS60</strain>
    </source>
</reference>
<reference key="2">
    <citation type="journal article" date="1990" name="Eur. J. Biochem.">
        <title>Role of lysine-67 in the active site of class C beta-lactamase from Citrobacter freundii GN346.</title>
        <authorList>
            <person name="Tsukamoto K."/>
            <person name="Tachibana K."/>
            <person name="Yamazaki N."/>
            <person name="Ishii Y."/>
            <person name="Ujiie K."/>
            <person name="Nishida N."/>
            <person name="Sawai T."/>
        </authorList>
    </citation>
    <scope>NUCLEOTIDE SEQUENCE [GENOMIC DNA]</scope>
    <source>
        <strain>GN346</strain>
    </source>
</reference>
<reference key="3">
    <citation type="journal article" date="1988" name="Rev. Infect. Dis.">
        <title>Amino acid sequence, active-site residue, and effect of suicide inhibitors on cephalosporinase of Citrobacter freundii GN346.</title>
        <authorList>
            <person name="Sawai T."/>
            <person name="Yamaguchi A."/>
            <person name="Tsukamoto K."/>
        </authorList>
    </citation>
    <scope>NUCLEOTIDE SEQUENCE [GENOMIC DNA] OF 21-381</scope>
    <scope>INHIBITION BY SULBACTAM</scope>
    <source>
        <strain>GN346</strain>
    </source>
</reference>
<reference key="4">
    <citation type="journal article" date="1987" name="FEBS Lett.">
        <title>Identification of the active site of Citrobacter freundii beta-lactamase using dansyl-penicillin.</title>
        <authorList>
            <person name="Yamaguchi A."/>
            <person name="Adachi H."/>
            <person name="Sawai T."/>
        </authorList>
    </citation>
    <scope>PROTEIN SEQUENCE OF 66-87</scope>
</reference>
<reference key="5">
    <citation type="journal article" date="2020" name="Antimicrob. Agents Chemother.">
        <title>A Standard Numbering Scheme for Class C beta-Lactamases.</title>
        <authorList>
            <person name="Mack A.R."/>
            <person name="Barnes M.D."/>
            <person name="Taracila M.A."/>
            <person name="Hujer A.M."/>
            <person name="Hujer K.M."/>
            <person name="Cabot G."/>
            <person name="Feldgarden M."/>
            <person name="Haft D.H."/>
            <person name="Klimke W."/>
            <person name="van den Akker F."/>
            <person name="Vila A.J."/>
            <person name="Smania A."/>
            <person name="Haider S."/>
            <person name="Papp-Wallace K.M."/>
            <person name="Bradford P.A."/>
            <person name="Rossolini G.M."/>
            <person name="Docquier J.D."/>
            <person name="Frere J.M."/>
            <person name="Galleni M."/>
            <person name="Hanson N.D."/>
            <person name="Oliver A."/>
            <person name="Plesiat P."/>
            <person name="Poirel L."/>
            <person name="Nordmann P."/>
            <person name="Palzkill T.G."/>
            <person name="Jacoby G.A."/>
            <person name="Bush K."/>
            <person name="Bonomo R.A."/>
        </authorList>
    </citation>
    <scope>AMINO ACID NUMBERING SCHEME</scope>
</reference>
<reference key="6">
    <citation type="journal article" date="1990" name="Nature">
        <title>Refined crystal structure of beta-lactamase from Citrobacter freundii indicates a mechanism for beta-lactam hydrolysis.</title>
        <authorList>
            <person name="Oefner C."/>
            <person name="D'Arcy A.A."/>
            <person name="Daly J.J."/>
            <person name="Gubernator K."/>
            <person name="Charnas R.L."/>
            <person name="Heinze I."/>
            <person name="Hubschwerlen C."/>
            <person name="Winkler F.K."/>
        </authorList>
    </citation>
    <scope>X-RAY CRYSTALLOGRAPHY (2.0 ANGSTROMS)</scope>
</reference>
<keyword id="KW-0002">3D-structure</keyword>
<keyword id="KW-0046">Antibiotic resistance</keyword>
<keyword id="KW-0903">Direct protein sequencing</keyword>
<keyword id="KW-0378">Hydrolase</keyword>
<keyword id="KW-0574">Periplasm</keyword>
<keyword id="KW-0732">Signal</keyword>
<comment type="function">
    <text>This protein is a serine beta-lactamase with a substrate specificity for cephalosporins.</text>
</comment>
<comment type="catalytic activity">
    <reaction evidence="2">
        <text>a beta-lactam + H2O = a substituted beta-amino acid</text>
        <dbReference type="Rhea" id="RHEA:20401"/>
        <dbReference type="ChEBI" id="CHEBI:15377"/>
        <dbReference type="ChEBI" id="CHEBI:35627"/>
        <dbReference type="ChEBI" id="CHEBI:140347"/>
        <dbReference type="EC" id="3.5.2.6"/>
    </reaction>
</comment>
<comment type="activity regulation">
    <text>Sulbactam is an effective progressive inhibitor but a poor competitive inhibitor.</text>
</comment>
<comment type="subcellular location">
    <subcellularLocation>
        <location evidence="1">Periplasm</location>
    </subcellularLocation>
</comment>
<comment type="miscellaneous">
    <text evidence="4">The class C beta-lactamase family has a specific amino-acid numbering system known as SANC, for structural alignment-based numbering of class C beta-lactamases, or else the simpler name structural position. A multiple sequence alignment was used to derive a consensus sequence and then the consensus was numbered taking into account insertions and deletions. This allows use of identical numbers, e.g. for active site residues, despite differences in protein length. UniProt always uses natural numbering of residues, hence there appear to be differences in numbering between this entry and some papers.</text>
</comment>
<comment type="similarity">
    <text evidence="3">Belongs to the class-C beta-lactamase family.</text>
</comment>